<protein>
    <recommendedName>
        <fullName evidence="4">Veswaprin-a</fullName>
    </recommendedName>
</protein>
<feature type="signal peptide" evidence="2">
    <location>
        <begin position="1"/>
        <end position="24"/>
    </location>
</feature>
<feature type="chain" id="PRO_5000395636" description="Veswaprin-a">
    <location>
        <begin position="25"/>
        <end position="74"/>
    </location>
</feature>
<feature type="domain" description="WAP" evidence="3">
    <location>
        <begin position="27"/>
        <end position="71"/>
    </location>
</feature>
<feature type="disulfide bond" evidence="3">
    <location>
        <begin position="34"/>
        <end position="59"/>
    </location>
</feature>
<feature type="disulfide bond" evidence="3">
    <location>
        <begin position="42"/>
        <end position="63"/>
    </location>
</feature>
<feature type="disulfide bond" evidence="3">
    <location>
        <begin position="46"/>
        <end position="58"/>
    </location>
</feature>
<feature type="disulfide bond" evidence="3">
    <location>
        <begin position="52"/>
        <end position="67"/>
    </location>
</feature>
<feature type="sequence conflict" description="In Ref. 2; ACC77763." evidence="5" ref="2">
    <original>AEVTPISGQ</original>
    <variation>EVLTPVSSK</variation>
    <location>
        <begin position="17"/>
        <end position="25"/>
    </location>
</feature>
<proteinExistence type="inferred from homology"/>
<keyword id="KW-0044">Antibiotic</keyword>
<keyword id="KW-0929">Antimicrobial</keyword>
<keyword id="KW-1015">Disulfide bond</keyword>
<keyword id="KW-0964">Secreted</keyword>
<keyword id="KW-0732">Signal</keyword>
<comment type="function">
    <text evidence="1">Damages membranes of susceptible bacteria. Has no hemolytic activity. Not toxic to mice. Does not inhibit the proteinases elastase and cathepsin G.</text>
</comment>
<comment type="subcellular location">
    <subcellularLocation>
        <location evidence="6">Secreted</location>
    </subcellularLocation>
</comment>
<comment type="tissue specificity">
    <text evidence="6">Expressed by the venom gland.</text>
</comment>
<comment type="similarity">
    <text evidence="5">Belongs to the venom waprin family.</text>
</comment>
<name>WAPA_DEMVE</name>
<reference key="1">
    <citation type="journal article" date="2008" name="Cell. Mol. Life Sci.">
        <title>Common evolution of waprin and Kunitz-like toxin families in Australian venomous snakes.</title>
        <authorList>
            <person name="St Pierre L."/>
            <person name="Earl S.T."/>
            <person name="Filippovich I."/>
            <person name="Sorokina N."/>
            <person name="Masci P.P."/>
            <person name="De Jersey J."/>
            <person name="Lavin M.F."/>
        </authorList>
    </citation>
    <scope>NUCLEOTIDE SEQUENCE [GENOMIC DNA]</scope>
    <source>
        <tissue>Venom gland</tissue>
    </source>
</reference>
<reference key="2">
    <citation type="submission" date="2008-01" db="EMBL/GenBank/DDBJ databases">
        <title>Waprins: a distinct toxin family from the venom of Australian Elapid snakes.</title>
        <authorList>
            <person name="St Pierre L."/>
        </authorList>
    </citation>
    <scope>NUCLEOTIDE SEQUENCE [MRNA]</scope>
    <source>
        <tissue>Venom gland</tissue>
    </source>
</reference>
<sequence>MSSGGLLLLLGLLTLWAEVTPISGQDRPKKPGLCPPRPQKPCVKECKNDWSCPGQQKCCNYGCIDECRDPIFVN</sequence>
<organism>
    <name type="scientific">Demansia vestigiata</name>
    <name type="common">Lesser black whip snake</name>
    <name type="synonym">Demansia atra</name>
    <dbReference type="NCBI Taxonomy" id="412038"/>
    <lineage>
        <taxon>Eukaryota</taxon>
        <taxon>Metazoa</taxon>
        <taxon>Chordata</taxon>
        <taxon>Craniata</taxon>
        <taxon>Vertebrata</taxon>
        <taxon>Euteleostomi</taxon>
        <taxon>Lepidosauria</taxon>
        <taxon>Squamata</taxon>
        <taxon>Bifurcata</taxon>
        <taxon>Unidentata</taxon>
        <taxon>Episquamata</taxon>
        <taxon>Toxicofera</taxon>
        <taxon>Serpentes</taxon>
        <taxon>Colubroidea</taxon>
        <taxon>Elapidae</taxon>
        <taxon>Notechinae</taxon>
        <taxon>Demansia</taxon>
    </lineage>
</organism>
<dbReference type="EMBL" id="EU401836">
    <property type="protein sequence ID" value="ACC77785.1"/>
    <property type="molecule type" value="Genomic_DNA"/>
</dbReference>
<dbReference type="EMBL" id="EU401814">
    <property type="protein sequence ID" value="ACC77763.1"/>
    <property type="molecule type" value="mRNA"/>
</dbReference>
<dbReference type="SMR" id="B5L5P8"/>
<dbReference type="GO" id="GO:0005576">
    <property type="term" value="C:extracellular region"/>
    <property type="evidence" value="ECO:0000250"/>
    <property type="project" value="UniProtKB"/>
</dbReference>
<dbReference type="GO" id="GO:0005615">
    <property type="term" value="C:extracellular space"/>
    <property type="evidence" value="ECO:0007669"/>
    <property type="project" value="TreeGrafter"/>
</dbReference>
<dbReference type="GO" id="GO:0004867">
    <property type="term" value="F:serine-type endopeptidase inhibitor activity"/>
    <property type="evidence" value="ECO:0007669"/>
    <property type="project" value="TreeGrafter"/>
</dbReference>
<dbReference type="GO" id="GO:0019731">
    <property type="term" value="P:antibacterial humoral response"/>
    <property type="evidence" value="ECO:0007669"/>
    <property type="project" value="TreeGrafter"/>
</dbReference>
<dbReference type="GO" id="GO:0045087">
    <property type="term" value="P:innate immune response"/>
    <property type="evidence" value="ECO:0007669"/>
    <property type="project" value="TreeGrafter"/>
</dbReference>
<dbReference type="GO" id="GO:0044278">
    <property type="term" value="P:venom-mediated disruption of cell wall in another organism"/>
    <property type="evidence" value="ECO:0000250"/>
    <property type="project" value="UniProtKB"/>
</dbReference>
<dbReference type="Gene3D" id="4.10.75.10">
    <property type="entry name" value="Elafin-like"/>
    <property type="match status" value="1"/>
</dbReference>
<dbReference type="InterPro" id="IPR036645">
    <property type="entry name" value="Elafin-like_sf"/>
</dbReference>
<dbReference type="InterPro" id="IPR008197">
    <property type="entry name" value="WAP_dom"/>
</dbReference>
<dbReference type="InterPro" id="IPR050514">
    <property type="entry name" value="WAP_four-disulfide_core"/>
</dbReference>
<dbReference type="PANTHER" id="PTHR19441:SF30">
    <property type="entry name" value="ELAFIN"/>
    <property type="match status" value="1"/>
</dbReference>
<dbReference type="PANTHER" id="PTHR19441">
    <property type="entry name" value="WHEY ACDIC PROTEIN WAP"/>
    <property type="match status" value="1"/>
</dbReference>
<dbReference type="Pfam" id="PF00095">
    <property type="entry name" value="WAP"/>
    <property type="match status" value="1"/>
</dbReference>
<dbReference type="PRINTS" id="PR00003">
    <property type="entry name" value="4DISULPHCORE"/>
</dbReference>
<dbReference type="SMART" id="SM00217">
    <property type="entry name" value="WAP"/>
    <property type="match status" value="1"/>
</dbReference>
<dbReference type="SUPFAM" id="SSF57256">
    <property type="entry name" value="Elafin-like"/>
    <property type="match status" value="1"/>
</dbReference>
<dbReference type="PROSITE" id="PS51390">
    <property type="entry name" value="WAP"/>
    <property type="match status" value="1"/>
</dbReference>
<accession>B5L5P8</accession>
<accession>B5L5M6</accession>
<evidence type="ECO:0000250" key="1">
    <source>
        <dbReference type="UniProtKB" id="P83952"/>
    </source>
</evidence>
<evidence type="ECO:0000255" key="2"/>
<evidence type="ECO:0000255" key="3">
    <source>
        <dbReference type="PROSITE-ProRule" id="PRU00722"/>
    </source>
</evidence>
<evidence type="ECO:0000303" key="4">
    <source>
    </source>
</evidence>
<evidence type="ECO:0000305" key="5"/>
<evidence type="ECO:0000305" key="6">
    <source>
    </source>
</evidence>